<sequence>MASLPRRLIWSFSYILRESFPIVSRRNCVSLLRASWRKVLSVGVGTSVCAIPVGQRSEPTLSSESLIKRAVSLVADSSSTFLSQTTYALVESLTEYTTAVYTLISLQQKYTSLLDKMNSNEESAIWQVIIGARVQMKQLKEQYLKYESSWQRAVSLSEMAAEAAYQSGADQASVTVRNHIQIVQTQVQQARNQAHIAEVQLAASQTDEIKRTITEDKGNPPSGGSPRSSLSEEEEIPEAYLRED</sequence>
<organism>
    <name type="scientific">Xenopus tropicalis</name>
    <name type="common">Western clawed frog</name>
    <name type="synonym">Silurana tropicalis</name>
    <dbReference type="NCBI Taxonomy" id="8364"/>
    <lineage>
        <taxon>Eukaryota</taxon>
        <taxon>Metazoa</taxon>
        <taxon>Chordata</taxon>
        <taxon>Craniata</taxon>
        <taxon>Vertebrata</taxon>
        <taxon>Euteleostomi</taxon>
        <taxon>Amphibia</taxon>
        <taxon>Batrachia</taxon>
        <taxon>Anura</taxon>
        <taxon>Pipoidea</taxon>
        <taxon>Pipidae</taxon>
        <taxon>Xenopodinae</taxon>
        <taxon>Xenopus</taxon>
        <taxon>Silurana</taxon>
    </lineage>
</organism>
<keyword id="KW-0053">Apoptosis</keyword>
<keyword id="KW-0496">Mitochondrion</keyword>
<keyword id="KW-1185">Reference proteome</keyword>
<keyword id="KW-0809">Transit peptide</keyword>
<reference evidence="6" key="1">
    <citation type="submission" date="2006-08" db="EMBL/GenBank/DDBJ databases">
        <authorList>
            <consortium name="NIH - Xenopus Gene Collection (XGC) project"/>
        </authorList>
    </citation>
    <scope>NUCLEOTIDE SEQUENCE [LARGE SCALE MRNA]</scope>
    <source>
        <tissue evidence="6">Testis</tissue>
    </source>
</reference>
<name>DBLOH_XENTR</name>
<dbReference type="EMBL" id="BC121212">
    <property type="protein sequence ID" value="AAI21213.1"/>
    <property type="molecule type" value="mRNA"/>
</dbReference>
<dbReference type="RefSeq" id="NP_001016281.1">
    <property type="nucleotide sequence ID" value="NM_001016281.3"/>
</dbReference>
<dbReference type="RefSeq" id="XP_017948600.1">
    <property type="nucleotide sequence ID" value="XM_018093111.1"/>
</dbReference>
<dbReference type="SMR" id="Q0IJ31"/>
<dbReference type="FunCoup" id="Q0IJ31">
    <property type="interactions" value="721"/>
</dbReference>
<dbReference type="STRING" id="8364.ENSXETP00000017507"/>
<dbReference type="PaxDb" id="8364-ENSXETP00000008194"/>
<dbReference type="DNASU" id="549035"/>
<dbReference type="GeneID" id="549035"/>
<dbReference type="KEGG" id="xtr:549035"/>
<dbReference type="AGR" id="Xenbase:XB-GENE-5915561"/>
<dbReference type="CTD" id="56616"/>
<dbReference type="Xenbase" id="XB-GENE-5915561">
    <property type="gene designation" value="diablo"/>
</dbReference>
<dbReference type="eggNOG" id="ENOG502RA48">
    <property type="taxonomic scope" value="Eukaryota"/>
</dbReference>
<dbReference type="HOGENOM" id="CLU_098879_0_0_1"/>
<dbReference type="InParanoid" id="Q0IJ31"/>
<dbReference type="OMA" id="WRCCAFF"/>
<dbReference type="OrthoDB" id="6153032at2759"/>
<dbReference type="PhylomeDB" id="Q0IJ31"/>
<dbReference type="TreeFam" id="TF102048"/>
<dbReference type="Reactome" id="R-XTR-111457">
    <property type="pathway name" value="Release of apoptotic factors from the mitochondria"/>
</dbReference>
<dbReference type="Reactome" id="R-XTR-111463">
    <property type="pathway name" value="SMAC (DIABLO) binds to IAPs"/>
</dbReference>
<dbReference type="Reactome" id="R-XTR-111464">
    <property type="pathway name" value="SMAC(DIABLO)-mediated dissociation of IAP:caspase complexes"/>
</dbReference>
<dbReference type="Reactome" id="R-XTR-111469">
    <property type="pathway name" value="SMAC, XIAP-regulated apoptotic response"/>
</dbReference>
<dbReference type="Reactome" id="R-XTR-9627069">
    <property type="pathway name" value="Regulation of the apoptosome activity"/>
</dbReference>
<dbReference type="Proteomes" id="UP000008143">
    <property type="component" value="Chromosome 1"/>
</dbReference>
<dbReference type="Bgee" id="ENSXETG00000003778">
    <property type="expression patterns" value="Expressed in 2-cell stage embryo and 14 other cell types or tissues"/>
</dbReference>
<dbReference type="GO" id="GO:0005737">
    <property type="term" value="C:cytoplasm"/>
    <property type="evidence" value="ECO:0000250"/>
    <property type="project" value="UniProtKB"/>
</dbReference>
<dbReference type="GO" id="GO:0005739">
    <property type="term" value="C:mitochondrion"/>
    <property type="evidence" value="ECO:0000250"/>
    <property type="project" value="UniProtKB"/>
</dbReference>
<dbReference type="GO" id="GO:0006915">
    <property type="term" value="P:apoptotic process"/>
    <property type="evidence" value="ECO:0007669"/>
    <property type="project" value="UniProtKB-KW"/>
</dbReference>
<dbReference type="GO" id="GO:0043065">
    <property type="term" value="P:positive regulation of apoptotic process"/>
    <property type="evidence" value="ECO:0000250"/>
    <property type="project" value="UniProtKB"/>
</dbReference>
<dbReference type="FunFam" id="1.20.58.70:FF:000012">
    <property type="entry name" value="diablo homolog, mitochondrial isoform X1"/>
    <property type="match status" value="1"/>
</dbReference>
<dbReference type="Gene3D" id="1.20.58.70">
    <property type="match status" value="1"/>
</dbReference>
<dbReference type="InterPro" id="IPR009062">
    <property type="entry name" value="Smac/DIABLO-like_sf"/>
</dbReference>
<dbReference type="InterPro" id="IPR015142">
    <property type="entry name" value="Smac_DIABLO"/>
</dbReference>
<dbReference type="PANTHER" id="PTHR32247">
    <property type="entry name" value="DIABLO HOMOLOG, MITOCHONDRIAL"/>
    <property type="match status" value="1"/>
</dbReference>
<dbReference type="PANTHER" id="PTHR32247:SF3">
    <property type="entry name" value="DIABLO IAP-BINDING MITOCHONDRIAL PROTEIN"/>
    <property type="match status" value="1"/>
</dbReference>
<dbReference type="Pfam" id="PF09057">
    <property type="entry name" value="Smac_DIABLO"/>
    <property type="match status" value="1"/>
</dbReference>
<dbReference type="SUPFAM" id="SSF46984">
    <property type="entry name" value="Smac/diablo"/>
    <property type="match status" value="1"/>
</dbReference>
<comment type="function">
    <text evidence="1 2">Promotes apoptosis. Acts by opposing the inhibitory activity of inhibitor of apoptosis proteins (IAP) (By similarity).</text>
</comment>
<comment type="subunit">
    <text evidence="2">Homodimer.</text>
</comment>
<comment type="subcellular location">
    <subcellularLocation>
        <location evidence="2">Mitochondrion</location>
    </subcellularLocation>
    <text evidence="2">Released into the cytosol when cells undergo apoptosis.</text>
</comment>
<comment type="similarity">
    <text evidence="5">Belongs to the Smac/DIABLO protein family.</text>
</comment>
<protein>
    <recommendedName>
        <fullName evidence="2">Diablo homolog, mitochondrial</fullName>
    </recommendedName>
    <alternativeName>
        <fullName evidence="2">Direct IAP-binding protein with low pI</fullName>
    </alternativeName>
    <alternativeName>
        <fullName evidence="2">Second mitochondria-derived activator of caspase</fullName>
        <shortName evidence="2">Smac protein</shortName>
    </alternativeName>
</protein>
<accession>Q0IJ31</accession>
<gene>
    <name evidence="6" type="primary">diablo</name>
    <name evidence="1" type="synonym">smac</name>
</gene>
<proteinExistence type="evidence at transcript level"/>
<evidence type="ECO:0000250" key="1">
    <source>
        <dbReference type="UniProtKB" id="A4GZV0"/>
    </source>
</evidence>
<evidence type="ECO:0000250" key="2">
    <source>
        <dbReference type="UniProtKB" id="Q9NR28"/>
    </source>
</evidence>
<evidence type="ECO:0000255" key="3"/>
<evidence type="ECO:0000256" key="4">
    <source>
        <dbReference type="SAM" id="MobiDB-lite"/>
    </source>
</evidence>
<evidence type="ECO:0000305" key="5"/>
<evidence type="ECO:0000312" key="6">
    <source>
        <dbReference type="EMBL" id="AAI21213.1"/>
    </source>
</evidence>
<feature type="transit peptide" description="Mitochondrion" evidence="3">
    <location>
        <begin position="1"/>
        <end position="38"/>
    </location>
</feature>
<feature type="chain" id="PRO_0000379494" description="Diablo homolog, mitochondrial" evidence="3">
    <location>
        <begin position="39"/>
        <end position="244"/>
    </location>
</feature>
<feature type="region of interest" description="Disordered" evidence="4">
    <location>
        <begin position="207"/>
        <end position="244"/>
    </location>
</feature>
<feature type="short sequence motif" description="IAP-binding" evidence="3">
    <location>
        <begin position="50"/>
        <end position="54"/>
    </location>
</feature>
<feature type="compositionally biased region" description="Basic and acidic residues" evidence="4">
    <location>
        <begin position="207"/>
        <end position="218"/>
    </location>
</feature>
<feature type="compositionally biased region" description="Low complexity" evidence="4">
    <location>
        <begin position="220"/>
        <end position="229"/>
    </location>
</feature>